<dbReference type="EC" id="2.1.2.9" evidence="1"/>
<dbReference type="EMBL" id="CP000820">
    <property type="protein sequence ID" value="ABW11157.1"/>
    <property type="molecule type" value="Genomic_DNA"/>
</dbReference>
<dbReference type="RefSeq" id="WP_020459329.1">
    <property type="nucleotide sequence ID" value="NC_009921.1"/>
</dbReference>
<dbReference type="SMR" id="A8LE22"/>
<dbReference type="STRING" id="298653.Franean1_1719"/>
<dbReference type="KEGG" id="fre:Franean1_1719"/>
<dbReference type="eggNOG" id="COG0223">
    <property type="taxonomic scope" value="Bacteria"/>
</dbReference>
<dbReference type="HOGENOM" id="CLU_033347_1_1_11"/>
<dbReference type="GO" id="GO:0005829">
    <property type="term" value="C:cytosol"/>
    <property type="evidence" value="ECO:0007669"/>
    <property type="project" value="TreeGrafter"/>
</dbReference>
<dbReference type="GO" id="GO:0004479">
    <property type="term" value="F:methionyl-tRNA formyltransferase activity"/>
    <property type="evidence" value="ECO:0007669"/>
    <property type="project" value="UniProtKB-UniRule"/>
</dbReference>
<dbReference type="CDD" id="cd08646">
    <property type="entry name" value="FMT_core_Met-tRNA-FMT_N"/>
    <property type="match status" value="1"/>
</dbReference>
<dbReference type="CDD" id="cd08704">
    <property type="entry name" value="Met_tRNA_FMT_C"/>
    <property type="match status" value="1"/>
</dbReference>
<dbReference type="FunFam" id="3.40.50.12230:FF:000001">
    <property type="entry name" value="Methionyl-tRNA formyltransferase"/>
    <property type="match status" value="1"/>
</dbReference>
<dbReference type="Gene3D" id="3.40.50.12230">
    <property type="match status" value="1"/>
</dbReference>
<dbReference type="HAMAP" id="MF_00182">
    <property type="entry name" value="Formyl_trans"/>
    <property type="match status" value="1"/>
</dbReference>
<dbReference type="InterPro" id="IPR005794">
    <property type="entry name" value="Fmt"/>
</dbReference>
<dbReference type="InterPro" id="IPR005793">
    <property type="entry name" value="Formyl_trans_C"/>
</dbReference>
<dbReference type="InterPro" id="IPR002376">
    <property type="entry name" value="Formyl_transf_N"/>
</dbReference>
<dbReference type="InterPro" id="IPR036477">
    <property type="entry name" value="Formyl_transf_N_sf"/>
</dbReference>
<dbReference type="InterPro" id="IPR011034">
    <property type="entry name" value="Formyl_transferase-like_C_sf"/>
</dbReference>
<dbReference type="InterPro" id="IPR044135">
    <property type="entry name" value="Met-tRNA-FMT_C"/>
</dbReference>
<dbReference type="InterPro" id="IPR041711">
    <property type="entry name" value="Met-tRNA-FMT_N"/>
</dbReference>
<dbReference type="NCBIfam" id="TIGR00460">
    <property type="entry name" value="fmt"/>
    <property type="match status" value="1"/>
</dbReference>
<dbReference type="PANTHER" id="PTHR11138">
    <property type="entry name" value="METHIONYL-TRNA FORMYLTRANSFERASE"/>
    <property type="match status" value="1"/>
</dbReference>
<dbReference type="PANTHER" id="PTHR11138:SF5">
    <property type="entry name" value="METHIONYL-TRNA FORMYLTRANSFERASE, MITOCHONDRIAL"/>
    <property type="match status" value="1"/>
</dbReference>
<dbReference type="Pfam" id="PF02911">
    <property type="entry name" value="Formyl_trans_C"/>
    <property type="match status" value="1"/>
</dbReference>
<dbReference type="Pfam" id="PF00551">
    <property type="entry name" value="Formyl_trans_N"/>
    <property type="match status" value="1"/>
</dbReference>
<dbReference type="SUPFAM" id="SSF50486">
    <property type="entry name" value="FMT C-terminal domain-like"/>
    <property type="match status" value="1"/>
</dbReference>
<dbReference type="SUPFAM" id="SSF53328">
    <property type="entry name" value="Formyltransferase"/>
    <property type="match status" value="1"/>
</dbReference>
<accession>A8LE22</accession>
<proteinExistence type="inferred from homology"/>
<comment type="function">
    <text evidence="1">Attaches a formyl group to the free amino group of methionyl-tRNA(fMet). The formyl group appears to play a dual role in the initiator identity of N-formylmethionyl-tRNA by promoting its recognition by IF2 and preventing the misappropriation of this tRNA by the elongation apparatus.</text>
</comment>
<comment type="catalytic activity">
    <reaction evidence="1">
        <text>L-methionyl-tRNA(fMet) + (6R)-10-formyltetrahydrofolate = N-formyl-L-methionyl-tRNA(fMet) + (6S)-5,6,7,8-tetrahydrofolate + H(+)</text>
        <dbReference type="Rhea" id="RHEA:24380"/>
        <dbReference type="Rhea" id="RHEA-COMP:9952"/>
        <dbReference type="Rhea" id="RHEA-COMP:9953"/>
        <dbReference type="ChEBI" id="CHEBI:15378"/>
        <dbReference type="ChEBI" id="CHEBI:57453"/>
        <dbReference type="ChEBI" id="CHEBI:78530"/>
        <dbReference type="ChEBI" id="CHEBI:78844"/>
        <dbReference type="ChEBI" id="CHEBI:195366"/>
        <dbReference type="EC" id="2.1.2.9"/>
    </reaction>
</comment>
<comment type="similarity">
    <text evidence="1">Belongs to the Fmt family.</text>
</comment>
<name>FMT_PARS2</name>
<gene>
    <name evidence="1" type="primary">fmt</name>
    <name type="ordered locus">Franean1_1719</name>
</gene>
<reference key="1">
    <citation type="journal article" date="2007" name="Genome Res.">
        <title>Genome characteristics of facultatively symbiotic Frankia sp. strains reflect host range and host plant biogeography.</title>
        <authorList>
            <person name="Normand P."/>
            <person name="Lapierre P."/>
            <person name="Tisa L.S."/>
            <person name="Gogarten J.P."/>
            <person name="Alloisio N."/>
            <person name="Bagnarol E."/>
            <person name="Bassi C.A."/>
            <person name="Berry A.M."/>
            <person name="Bickhart D.M."/>
            <person name="Choisne N."/>
            <person name="Couloux A."/>
            <person name="Cournoyer B."/>
            <person name="Cruveiller S."/>
            <person name="Daubin V."/>
            <person name="Demange N."/>
            <person name="Francino M.P."/>
            <person name="Goltsman E."/>
            <person name="Huang Y."/>
            <person name="Kopp O.R."/>
            <person name="Labarre L."/>
            <person name="Lapidus A."/>
            <person name="Lavire C."/>
            <person name="Marechal J."/>
            <person name="Martinez M."/>
            <person name="Mastronunzio J.E."/>
            <person name="Mullin B.C."/>
            <person name="Niemann J."/>
            <person name="Pujic P."/>
            <person name="Rawnsley T."/>
            <person name="Rouy Z."/>
            <person name="Schenowitz C."/>
            <person name="Sellstedt A."/>
            <person name="Tavares F."/>
            <person name="Tomkins J.P."/>
            <person name="Vallenet D."/>
            <person name="Valverde C."/>
            <person name="Wall L.G."/>
            <person name="Wang Y."/>
            <person name="Medigue C."/>
            <person name="Benson D.R."/>
        </authorList>
    </citation>
    <scope>NUCLEOTIDE SEQUENCE [LARGE SCALE GENOMIC DNA]</scope>
    <source>
        <strain>EAN1pec</strain>
    </source>
</reference>
<organism>
    <name type="scientific">Parafrankia sp. (strain EAN1pec)</name>
    <dbReference type="NCBI Taxonomy" id="298653"/>
    <lineage>
        <taxon>Bacteria</taxon>
        <taxon>Bacillati</taxon>
        <taxon>Actinomycetota</taxon>
        <taxon>Actinomycetes</taxon>
        <taxon>Frankiales</taxon>
        <taxon>Frankiaceae</taxon>
        <taxon>Parafrankia</taxon>
    </lineage>
</organism>
<protein>
    <recommendedName>
        <fullName evidence="1">Methionyl-tRNA formyltransferase</fullName>
        <ecNumber evidence="1">2.1.2.9</ecNumber>
    </recommendedName>
</protein>
<sequence>MRLVFAGTPAVALPSLRALLDSPRHQVVAVVTRPDRPAGRGRHQRSSPVRELADERGLEVLAPARASDPDFLARLGEIAPDCCPVVAYGALLPRPALDIPKHGWVNLHFSLLPAYRGAAPVQRAVLAGEDMTGASVFEIEPALDSGPVYGVLTERIRPTDTSGDLLDRLAVAGARLLEAVMDGIEDGTLQARPQPSDGVSLAPKLTVEDVRVDWSAPAAAVDRLVRAATPAPGAWTTFRDRRVKLGPVRPAPAGHPPLPSGRLAAPERGLVLVGTATTPVVLDEVRPEGKAPMPAADWIRGLRPGTDEAFA</sequence>
<evidence type="ECO:0000255" key="1">
    <source>
        <dbReference type="HAMAP-Rule" id="MF_00182"/>
    </source>
</evidence>
<evidence type="ECO:0000256" key="2">
    <source>
        <dbReference type="SAM" id="MobiDB-lite"/>
    </source>
</evidence>
<feature type="chain" id="PRO_1000098405" description="Methionyl-tRNA formyltransferase">
    <location>
        <begin position="1"/>
        <end position="311"/>
    </location>
</feature>
<feature type="region of interest" description="Disordered" evidence="2">
    <location>
        <begin position="33"/>
        <end position="52"/>
    </location>
</feature>
<feature type="binding site" evidence="1">
    <location>
        <begin position="110"/>
        <end position="113"/>
    </location>
    <ligand>
        <name>(6S)-5,6,7,8-tetrahydrofolate</name>
        <dbReference type="ChEBI" id="CHEBI:57453"/>
    </ligand>
</feature>
<keyword id="KW-0648">Protein biosynthesis</keyword>
<keyword id="KW-0808">Transferase</keyword>